<evidence type="ECO:0000250" key="1"/>
<evidence type="ECO:0000255" key="2"/>
<evidence type="ECO:0000305" key="3"/>
<reference key="1">
    <citation type="journal article" date="2006" name="Lancet">
        <title>Complete genome sequence of USA300, an epidemic clone of community-acquired meticillin-resistant Staphylococcus aureus.</title>
        <authorList>
            <person name="Diep B.A."/>
            <person name="Gill S.R."/>
            <person name="Chang R.F."/>
            <person name="Phan T.H."/>
            <person name="Chen J.H."/>
            <person name="Davidson M.G."/>
            <person name="Lin F."/>
            <person name="Lin J."/>
            <person name="Carleton H.A."/>
            <person name="Mongodin E.F."/>
            <person name="Sensabaugh G.F."/>
            <person name="Perdreau-Remington F."/>
        </authorList>
    </citation>
    <scope>NUCLEOTIDE SEQUENCE [LARGE SCALE GENOMIC DNA]</scope>
    <source>
        <strain>USA300</strain>
    </source>
</reference>
<gene>
    <name type="primary">splD</name>
    <name type="ordered locus">SAUSA300_1755</name>
</gene>
<proteinExistence type="inferred from homology"/>
<name>SPLD_STAA3</name>
<comment type="subcellular location">
    <subcellularLocation>
        <location evidence="1">Secreted</location>
    </subcellularLocation>
</comment>
<comment type="similarity">
    <text evidence="3">Belongs to the peptidase S1B family.</text>
</comment>
<accession>Q2FFT2</accession>
<keyword id="KW-0378">Hydrolase</keyword>
<keyword id="KW-0645">Protease</keyword>
<keyword id="KW-0964">Secreted</keyword>
<keyword id="KW-0720">Serine protease</keyword>
<keyword id="KW-0732">Signal</keyword>
<organism>
    <name type="scientific">Staphylococcus aureus (strain USA300)</name>
    <dbReference type="NCBI Taxonomy" id="367830"/>
    <lineage>
        <taxon>Bacteria</taxon>
        <taxon>Bacillati</taxon>
        <taxon>Bacillota</taxon>
        <taxon>Bacilli</taxon>
        <taxon>Bacillales</taxon>
        <taxon>Staphylococcaceae</taxon>
        <taxon>Staphylococcus</taxon>
    </lineage>
</organism>
<dbReference type="EC" id="3.4.21.-"/>
<dbReference type="EMBL" id="CP000255">
    <property type="protein sequence ID" value="ABD21002.1"/>
    <property type="molecule type" value="Genomic_DNA"/>
</dbReference>
<dbReference type="RefSeq" id="WP_001038704.1">
    <property type="nucleotide sequence ID" value="NZ_CP027476.1"/>
</dbReference>
<dbReference type="SMR" id="Q2FFT2"/>
<dbReference type="MEROPS" id="S01.526"/>
<dbReference type="KEGG" id="saa:SAUSA300_1755"/>
<dbReference type="HOGENOM" id="CLU_073589_2_0_9"/>
<dbReference type="OMA" id="AQNENTM"/>
<dbReference type="Proteomes" id="UP000001939">
    <property type="component" value="Chromosome"/>
</dbReference>
<dbReference type="GO" id="GO:0005576">
    <property type="term" value="C:extracellular region"/>
    <property type="evidence" value="ECO:0007669"/>
    <property type="project" value="UniProtKB-SubCell"/>
</dbReference>
<dbReference type="GO" id="GO:0008236">
    <property type="term" value="F:serine-type peptidase activity"/>
    <property type="evidence" value="ECO:0007669"/>
    <property type="project" value="UniProtKB-KW"/>
</dbReference>
<dbReference type="GO" id="GO:0006508">
    <property type="term" value="P:proteolysis"/>
    <property type="evidence" value="ECO:0007669"/>
    <property type="project" value="UniProtKB-KW"/>
</dbReference>
<dbReference type="Gene3D" id="2.40.10.10">
    <property type="entry name" value="Trypsin-like serine proteases"/>
    <property type="match status" value="2"/>
</dbReference>
<dbReference type="InterPro" id="IPR009003">
    <property type="entry name" value="Peptidase_S1_PA"/>
</dbReference>
<dbReference type="InterPro" id="IPR043504">
    <property type="entry name" value="Peptidase_S1_PA_chymotrypsin"/>
</dbReference>
<dbReference type="InterPro" id="IPR008256">
    <property type="entry name" value="Peptidase_S1B"/>
</dbReference>
<dbReference type="InterPro" id="IPR028301">
    <property type="entry name" value="V8_his_AS"/>
</dbReference>
<dbReference type="PANTHER" id="PTHR43019:SF23">
    <property type="entry name" value="PROTEASE DO-LIKE 5, CHLOROPLASTIC"/>
    <property type="match status" value="1"/>
</dbReference>
<dbReference type="PANTHER" id="PTHR43019">
    <property type="entry name" value="SERINE ENDOPROTEASE DEGS"/>
    <property type="match status" value="1"/>
</dbReference>
<dbReference type="Pfam" id="PF13365">
    <property type="entry name" value="Trypsin_2"/>
    <property type="match status" value="1"/>
</dbReference>
<dbReference type="PRINTS" id="PR00839">
    <property type="entry name" value="V8PROTEASE"/>
</dbReference>
<dbReference type="SUPFAM" id="SSF50494">
    <property type="entry name" value="Trypsin-like serine proteases"/>
    <property type="match status" value="1"/>
</dbReference>
<dbReference type="PROSITE" id="PS00672">
    <property type="entry name" value="V8_HIS"/>
    <property type="match status" value="1"/>
</dbReference>
<sequence length="239" mass="25678">MNKNIIIKSIAALTILTSITGVGTTVVDGIQQTAKAENSVKLITNTNVAPYSGVTWMGAGTGFVVGNHTIITNKHVTYHMKVGDEIKAHPNGFYNNGGGLYKVTKIVDYPGKEDIAVVQVEEKSTQPKGRKFKDFTSKFNIASEAKENEPISVIGYPNPNGNKLQMYESTGKVLSVNGNIVTSDAVVQPGSSGSPILNSKREAIGVMYASDKPTGESTRSFAVYFSPEIKKFIADNLDK</sequence>
<protein>
    <recommendedName>
        <fullName>Serine protease SplD</fullName>
        <ecNumber>3.4.21.-</ecNumber>
    </recommendedName>
</protein>
<feature type="signal peptide" evidence="2">
    <location>
        <begin position="1"/>
        <end position="36"/>
    </location>
</feature>
<feature type="chain" id="PRO_0000359571" description="Serine protease SplD">
    <location>
        <begin position="37"/>
        <end position="239"/>
    </location>
</feature>
<feature type="active site" description="Charge relay system" evidence="1">
    <location>
        <position position="75"/>
    </location>
</feature>
<feature type="active site" description="Charge relay system" evidence="1">
    <location>
        <position position="114"/>
    </location>
</feature>
<feature type="active site" description="Charge relay system" evidence="1">
    <location>
        <position position="192"/>
    </location>
</feature>